<feature type="chain" id="PRO_1000099621" description="Lipoyl synthase">
    <location>
        <begin position="1"/>
        <end position="321"/>
    </location>
</feature>
<feature type="domain" description="Radical SAM core" evidence="2">
    <location>
        <begin position="80"/>
        <end position="297"/>
    </location>
</feature>
<feature type="binding site" evidence="1">
    <location>
        <position position="68"/>
    </location>
    <ligand>
        <name>[4Fe-4S] cluster</name>
        <dbReference type="ChEBI" id="CHEBI:49883"/>
        <label>1</label>
    </ligand>
</feature>
<feature type="binding site" evidence="1">
    <location>
        <position position="73"/>
    </location>
    <ligand>
        <name>[4Fe-4S] cluster</name>
        <dbReference type="ChEBI" id="CHEBI:49883"/>
        <label>1</label>
    </ligand>
</feature>
<feature type="binding site" evidence="1">
    <location>
        <position position="79"/>
    </location>
    <ligand>
        <name>[4Fe-4S] cluster</name>
        <dbReference type="ChEBI" id="CHEBI:49883"/>
        <label>1</label>
    </ligand>
</feature>
<feature type="binding site" evidence="1">
    <location>
        <position position="94"/>
    </location>
    <ligand>
        <name>[4Fe-4S] cluster</name>
        <dbReference type="ChEBI" id="CHEBI:49883"/>
        <label>2</label>
        <note>4Fe-4S-S-AdoMet</note>
    </ligand>
</feature>
<feature type="binding site" evidence="1">
    <location>
        <position position="98"/>
    </location>
    <ligand>
        <name>[4Fe-4S] cluster</name>
        <dbReference type="ChEBI" id="CHEBI:49883"/>
        <label>2</label>
        <note>4Fe-4S-S-AdoMet</note>
    </ligand>
</feature>
<feature type="binding site" evidence="1">
    <location>
        <position position="101"/>
    </location>
    <ligand>
        <name>[4Fe-4S] cluster</name>
        <dbReference type="ChEBI" id="CHEBI:49883"/>
        <label>2</label>
        <note>4Fe-4S-S-AdoMet</note>
    </ligand>
</feature>
<feature type="binding site" evidence="1">
    <location>
        <position position="308"/>
    </location>
    <ligand>
        <name>[4Fe-4S] cluster</name>
        <dbReference type="ChEBI" id="CHEBI:49883"/>
        <label>1</label>
    </ligand>
</feature>
<dbReference type="EC" id="2.8.1.8" evidence="1"/>
<dbReference type="EMBL" id="AM942759">
    <property type="protein sequence ID" value="CAR41050.1"/>
    <property type="molecule type" value="Genomic_DNA"/>
</dbReference>
<dbReference type="RefSeq" id="WP_004246057.1">
    <property type="nucleotide sequence ID" value="NC_010554.1"/>
</dbReference>
<dbReference type="SMR" id="B4EV01"/>
<dbReference type="EnsemblBacteria" id="CAR41050">
    <property type="protein sequence ID" value="CAR41050"/>
    <property type="gene ID" value="PMI0420"/>
</dbReference>
<dbReference type="GeneID" id="6802881"/>
<dbReference type="KEGG" id="pmr:PMI0420"/>
<dbReference type="eggNOG" id="COG0320">
    <property type="taxonomic scope" value="Bacteria"/>
</dbReference>
<dbReference type="HOGENOM" id="CLU_033144_2_1_6"/>
<dbReference type="UniPathway" id="UPA00538">
    <property type="reaction ID" value="UER00593"/>
</dbReference>
<dbReference type="Proteomes" id="UP000008319">
    <property type="component" value="Chromosome"/>
</dbReference>
<dbReference type="GO" id="GO:0005737">
    <property type="term" value="C:cytoplasm"/>
    <property type="evidence" value="ECO:0007669"/>
    <property type="project" value="UniProtKB-SubCell"/>
</dbReference>
<dbReference type="GO" id="GO:0051539">
    <property type="term" value="F:4 iron, 4 sulfur cluster binding"/>
    <property type="evidence" value="ECO:0007669"/>
    <property type="project" value="UniProtKB-UniRule"/>
</dbReference>
<dbReference type="GO" id="GO:0016992">
    <property type="term" value="F:lipoate synthase activity"/>
    <property type="evidence" value="ECO:0007669"/>
    <property type="project" value="UniProtKB-UniRule"/>
</dbReference>
<dbReference type="GO" id="GO:0046872">
    <property type="term" value="F:metal ion binding"/>
    <property type="evidence" value="ECO:0007669"/>
    <property type="project" value="UniProtKB-KW"/>
</dbReference>
<dbReference type="CDD" id="cd01335">
    <property type="entry name" value="Radical_SAM"/>
    <property type="match status" value="1"/>
</dbReference>
<dbReference type="FunFam" id="3.20.20.70:FF:000023">
    <property type="entry name" value="Lipoyl synthase"/>
    <property type="match status" value="1"/>
</dbReference>
<dbReference type="Gene3D" id="3.20.20.70">
    <property type="entry name" value="Aldolase class I"/>
    <property type="match status" value="1"/>
</dbReference>
<dbReference type="HAMAP" id="MF_00206">
    <property type="entry name" value="Lipoyl_synth"/>
    <property type="match status" value="1"/>
</dbReference>
<dbReference type="InterPro" id="IPR013785">
    <property type="entry name" value="Aldolase_TIM"/>
</dbReference>
<dbReference type="InterPro" id="IPR006638">
    <property type="entry name" value="Elp3/MiaA/NifB-like_rSAM"/>
</dbReference>
<dbReference type="InterPro" id="IPR031691">
    <property type="entry name" value="LIAS_N"/>
</dbReference>
<dbReference type="InterPro" id="IPR003698">
    <property type="entry name" value="Lipoyl_synth"/>
</dbReference>
<dbReference type="InterPro" id="IPR007197">
    <property type="entry name" value="rSAM"/>
</dbReference>
<dbReference type="NCBIfam" id="TIGR00510">
    <property type="entry name" value="lipA"/>
    <property type="match status" value="1"/>
</dbReference>
<dbReference type="NCBIfam" id="NF004019">
    <property type="entry name" value="PRK05481.1"/>
    <property type="match status" value="1"/>
</dbReference>
<dbReference type="NCBIfam" id="NF009544">
    <property type="entry name" value="PRK12928.1"/>
    <property type="match status" value="1"/>
</dbReference>
<dbReference type="PANTHER" id="PTHR10949">
    <property type="entry name" value="LIPOYL SYNTHASE"/>
    <property type="match status" value="1"/>
</dbReference>
<dbReference type="PANTHER" id="PTHR10949:SF0">
    <property type="entry name" value="LIPOYL SYNTHASE, MITOCHONDRIAL"/>
    <property type="match status" value="1"/>
</dbReference>
<dbReference type="Pfam" id="PF16881">
    <property type="entry name" value="LIAS_N"/>
    <property type="match status" value="1"/>
</dbReference>
<dbReference type="Pfam" id="PF04055">
    <property type="entry name" value="Radical_SAM"/>
    <property type="match status" value="1"/>
</dbReference>
<dbReference type="PIRSF" id="PIRSF005963">
    <property type="entry name" value="Lipoyl_synth"/>
    <property type="match status" value="1"/>
</dbReference>
<dbReference type="SFLD" id="SFLDF00271">
    <property type="entry name" value="lipoyl_synthase"/>
    <property type="match status" value="1"/>
</dbReference>
<dbReference type="SFLD" id="SFLDS00029">
    <property type="entry name" value="Radical_SAM"/>
    <property type="match status" value="1"/>
</dbReference>
<dbReference type="SMART" id="SM00729">
    <property type="entry name" value="Elp3"/>
    <property type="match status" value="1"/>
</dbReference>
<dbReference type="SUPFAM" id="SSF102114">
    <property type="entry name" value="Radical SAM enzymes"/>
    <property type="match status" value="1"/>
</dbReference>
<dbReference type="PROSITE" id="PS51918">
    <property type="entry name" value="RADICAL_SAM"/>
    <property type="match status" value="1"/>
</dbReference>
<organism>
    <name type="scientific">Proteus mirabilis (strain HI4320)</name>
    <dbReference type="NCBI Taxonomy" id="529507"/>
    <lineage>
        <taxon>Bacteria</taxon>
        <taxon>Pseudomonadati</taxon>
        <taxon>Pseudomonadota</taxon>
        <taxon>Gammaproteobacteria</taxon>
        <taxon>Enterobacterales</taxon>
        <taxon>Morganellaceae</taxon>
        <taxon>Proteus</taxon>
    </lineage>
</organism>
<keyword id="KW-0004">4Fe-4S</keyword>
<keyword id="KW-0963">Cytoplasm</keyword>
<keyword id="KW-0408">Iron</keyword>
<keyword id="KW-0411">Iron-sulfur</keyword>
<keyword id="KW-0479">Metal-binding</keyword>
<keyword id="KW-1185">Reference proteome</keyword>
<keyword id="KW-0949">S-adenosyl-L-methionine</keyword>
<keyword id="KW-0808">Transferase</keyword>
<comment type="function">
    <text evidence="1">Catalyzes the radical-mediated insertion of two sulfur atoms into the C-6 and C-8 positions of the octanoyl moiety bound to the lipoyl domains of lipoate-dependent enzymes, thereby converting the octanoylated domains into lipoylated derivatives.</text>
</comment>
<comment type="catalytic activity">
    <reaction evidence="1">
        <text>[[Fe-S] cluster scaffold protein carrying a second [4Fe-4S](2+) cluster] + N(6)-octanoyl-L-lysyl-[protein] + 2 oxidized [2Fe-2S]-[ferredoxin] + 2 S-adenosyl-L-methionine + 4 H(+) = [[Fe-S] cluster scaffold protein] + N(6)-[(R)-dihydrolipoyl]-L-lysyl-[protein] + 4 Fe(3+) + 2 hydrogen sulfide + 2 5'-deoxyadenosine + 2 L-methionine + 2 reduced [2Fe-2S]-[ferredoxin]</text>
        <dbReference type="Rhea" id="RHEA:16585"/>
        <dbReference type="Rhea" id="RHEA-COMP:9928"/>
        <dbReference type="Rhea" id="RHEA-COMP:10000"/>
        <dbReference type="Rhea" id="RHEA-COMP:10001"/>
        <dbReference type="Rhea" id="RHEA-COMP:10475"/>
        <dbReference type="Rhea" id="RHEA-COMP:14568"/>
        <dbReference type="Rhea" id="RHEA-COMP:14569"/>
        <dbReference type="ChEBI" id="CHEBI:15378"/>
        <dbReference type="ChEBI" id="CHEBI:17319"/>
        <dbReference type="ChEBI" id="CHEBI:29034"/>
        <dbReference type="ChEBI" id="CHEBI:29919"/>
        <dbReference type="ChEBI" id="CHEBI:33722"/>
        <dbReference type="ChEBI" id="CHEBI:33737"/>
        <dbReference type="ChEBI" id="CHEBI:33738"/>
        <dbReference type="ChEBI" id="CHEBI:57844"/>
        <dbReference type="ChEBI" id="CHEBI:59789"/>
        <dbReference type="ChEBI" id="CHEBI:78809"/>
        <dbReference type="ChEBI" id="CHEBI:83100"/>
        <dbReference type="EC" id="2.8.1.8"/>
    </reaction>
</comment>
<comment type="cofactor">
    <cofactor evidence="1">
        <name>[4Fe-4S] cluster</name>
        <dbReference type="ChEBI" id="CHEBI:49883"/>
    </cofactor>
    <text evidence="1">Binds 2 [4Fe-4S] clusters per subunit. One cluster is coordinated with 3 cysteines and an exchangeable S-adenosyl-L-methionine.</text>
</comment>
<comment type="pathway">
    <text evidence="1">Protein modification; protein lipoylation via endogenous pathway; protein N(6)-(lipoyl)lysine from octanoyl-[acyl-carrier-protein]: step 2/2.</text>
</comment>
<comment type="subcellular location">
    <subcellularLocation>
        <location evidence="1">Cytoplasm</location>
    </subcellularLocation>
</comment>
<comment type="similarity">
    <text evidence="1">Belongs to the radical SAM superfamily. Lipoyl synthase family.</text>
</comment>
<proteinExistence type="inferred from homology"/>
<gene>
    <name evidence="1" type="primary">lipA</name>
    <name type="ordered locus">PMI0420</name>
</gene>
<protein>
    <recommendedName>
        <fullName evidence="1">Lipoyl synthase</fullName>
        <ecNumber evidence="1">2.8.1.8</ecNumber>
    </recommendedName>
    <alternativeName>
        <fullName evidence="1">Lip-syn</fullName>
        <shortName evidence="1">LS</shortName>
    </alternativeName>
    <alternativeName>
        <fullName evidence="1">Lipoate synthase</fullName>
    </alternativeName>
    <alternativeName>
        <fullName evidence="1">Lipoic acid synthase</fullName>
    </alternativeName>
    <alternativeName>
        <fullName evidence="1">Sulfur insertion protein LipA</fullName>
    </alternativeName>
</protein>
<name>LIPA_PROMH</name>
<evidence type="ECO:0000255" key="1">
    <source>
        <dbReference type="HAMAP-Rule" id="MF_00206"/>
    </source>
</evidence>
<evidence type="ECO:0000255" key="2">
    <source>
        <dbReference type="PROSITE-ProRule" id="PRU01266"/>
    </source>
</evidence>
<reference key="1">
    <citation type="journal article" date="2008" name="J. Bacteriol.">
        <title>Complete genome sequence of uropathogenic Proteus mirabilis, a master of both adherence and motility.</title>
        <authorList>
            <person name="Pearson M.M."/>
            <person name="Sebaihia M."/>
            <person name="Churcher C."/>
            <person name="Quail M.A."/>
            <person name="Seshasayee A.S."/>
            <person name="Luscombe N.M."/>
            <person name="Abdellah Z."/>
            <person name="Arrosmith C."/>
            <person name="Atkin B."/>
            <person name="Chillingworth T."/>
            <person name="Hauser H."/>
            <person name="Jagels K."/>
            <person name="Moule S."/>
            <person name="Mungall K."/>
            <person name="Norbertczak H."/>
            <person name="Rabbinowitsch E."/>
            <person name="Walker D."/>
            <person name="Whithead S."/>
            <person name="Thomson N.R."/>
            <person name="Rather P.N."/>
            <person name="Parkhill J."/>
            <person name="Mobley H.L.T."/>
        </authorList>
    </citation>
    <scope>NUCLEOTIDE SEQUENCE [LARGE SCALE GENOMIC DNA]</scope>
    <source>
        <strain>HI4320</strain>
    </source>
</reference>
<sequence>MSKPIQMERGVKYRDADKMALIPVKTIVTEREELLRKPEWMKIKLPADSSKIQGIKAAMRKNGLHSVCEEASCPNLAECFNHGTATFMILGAICTRRCPFCDVAHGRPNAPDPQEPIKLAQTIKDMGLRYVVITSVDRDDLRDGGAQHFADCITAIREKNPNIRIETLVPDFRGRMDKALEILTDTPPDVFNHNLENVPRVYRQVRPGANYQWSLTLLERFKQAHPNIPTKSGLMVGLGETNEEIIDVMRDLRKHGVTMLTLGQYLQPSRHHLPVQRYVSPDEFEYMKEQALAMGFTHAACGPFVRSSYHADLQAQGIEVK</sequence>
<accession>B4EV01</accession>